<proteinExistence type="evidence at protein level"/>
<comment type="function">
    <text evidence="2 5 6 7 9">Protein, which is both involved in DNA repair and protein ubiquitination, as part of the UV-DDB complex and DCX (DDB1-CUL4-X-box) complexes, respectively (PubMed:12107171, PubMed:26431207, PubMed:28790135). Core component of the UV-DDB complex (UV-damaged DNA-binding protein complex), a complex that recognizes UV-induced DNA damage and recruit proteins of the nucleotide excision repair pathway (the NER pathway) to initiate DNA repair (PubMed:12107171). The UV-DDB complex preferentially binds to cyclobutane pyrimidine dimers (CPD), 6-4 photoproducts (6-4 PP), apurinic sites and short mismatches (By similarity). Also functions as a component of numerous distinct DCX (DDB1-CUL4-X-box) E3 ubiquitin-protein ligase complexes which mediate the ubiquitination and subsequent proteasomal degradation of target proteins (By similarity). The functional specificity of the DCX E3 ubiquitin-protein ligase complex is determined by the variable substrate recognition component recruited by DDB1 (By similarity). DCX(DDB2) (also known as DDB1-CUL4-ROC1, CUL4-DDB-ROC1 and CUL4-DDB-RBX1) may ubiquitinate histone H2A, histone H3 and histone H4 at sites of UV-induced DNA damage (By similarity). The ubiquitination of histones may facilitate their removal from the nucleosome and promote subsequent DNA repair (By similarity). DCX(DDB2) also ubiquitinates XPC, which may enhance DNA-binding by XPC and promote NER (By similarity). DCX(DTL) plays a role in PCNA-dependent polyubiquitination of CDT1 and MDM2-dependent ubiquitination of TP53 in response to radiation-induced DNA damage and during DNA replication (By similarity). DCX(ERCC8) (the CSA complex) plays a role in transcription-coupled repair (TCR) (By similarity). The DDB1-CUL4A-DTL E3 ligase complex regulates the circadian clock function by mediating the ubiquitination and degradation of CRY1 (PubMed:26431207). DDB1-mediated CRY1 degradation promotes FOXO1 protein stability and FOXO1-mediated gluconeogenesis in the liver (PubMed:28790135). By acting on TET dioxygenses, essential for oocyte maintenance at the primordial follicle stage, hence essential for female fertility (PubMed:24357321). Maternal factor required for proper zygotic genome activation and genome reprogramming (PubMed:24357321).</text>
</comment>
<comment type="pathway">
    <text evidence="2">Protein modification; protein ubiquitination.</text>
</comment>
<comment type="subunit">
    <text evidence="2 8 10 11 12">Component of the UV-DDB complex which includes DDB1 and DDB2; the heterodimer dimerizes to give rise to a heterotetramer when bound to damaged DNA. The UV-DDB complex interacts with monoubiquitinated histone H2A and binds to XPC via the DDB2 subunit. Component of numerous DCX (DDB1-CUL4-X-box) E3 ubiquitin-protein ligase complexes which consist of a core of DDB1, CUL4A or CUL4B and RBX1. DDB1 may recruit specific substrate targeting subunits to the DCX complex. These substrate targeting subunits are generally known as DCAF (DDB1- and CUL4-associated factor) or CDW (CUL4-DDB1-associated WD40-repeat) proteins. Interacts with AMBRA1, ATG16L1, BTRC, CRBN, DCAF1, DCAF4, DCAF5, DCAF6, DCAF7, DCAF8, DCAF9, DCAF10, DCAF11, DCAF12, DCAF15, DCAF16, DCAF17, DDA1, DET1, DTL, ERCC8, FBXW5, FBXW8, GRWD1, KATNB1, NLE1, NUP43, PAFAH1B1, PHIP, PWP1, RBBP4, RBBP5, RBBP7, COP1, SNRNP40, DCAF1, WDR5, WDR5B, WDR12, WDR26, WDR39, WDR42, WDR53, WDR59, WDR61, WSB1, WSB2, LRWD1 and WDTC1. DCX complexes may associate with the COP9 signalosome, and this inhibits the E3 ubiquitin-protein ligase activity of the complex. Interacts with NF2, TSC1 and TSC2. Interacts with AGO1 and AGO2. Associates with the E3 ligase complex containing DYRK2, EDD/UBR5, DDB1 and DCAF1 proteins (EDVP complex). Interacts directly with DYRK2. DCX(DTL) complex interacts with FBXO11; does not ubiquitinate and degradate FBXO11. Interacts with TRPC4AP (By similarity). Interacts with CRY1 and CRY2 (PubMed:27123980). The DDB1-CUL4A complex interacts with CRY1 (PubMed:27123980). Component of the DCX(DCAF13) E3 ubiquitin ligase complex, at least composed of CUL4 (CUL4A or CUL4B), DDB1, DCAF13 and RBX1. Interacts with DCAF13 (via WD40 domain) (PubMed:30111536, PubMed:31492966, PubMed:35178836).</text>
</comment>
<comment type="interaction">
    <interactant intactId="EBI-2552275">
        <id>Q3U1J4</id>
    </interactant>
    <interactant intactId="EBI-79859">
        <id>O08785</id>
        <label>Clock</label>
    </interactant>
    <organismsDiffer>false</organismsDiffer>
    <experiments>4</experiments>
</comment>
<comment type="interaction">
    <interactant intactId="EBI-2552275">
        <id>Q3U1J4</id>
    </interactant>
    <interactant intactId="EBI-8010314">
        <id>Q923J1</id>
        <label>Trpm7</label>
    </interactant>
    <organismsDiffer>false</organismsDiffer>
    <experiments>2</experiments>
</comment>
<comment type="subcellular location">
    <subcellularLocation>
        <location evidence="6">Cytoplasm</location>
    </subcellularLocation>
    <subcellularLocation>
        <location evidence="6">Nucleus</location>
    </subcellularLocation>
    <text evidence="2 6">Primarily cytoplasmic. Translocates to the nucleus following UV irradiation and subsequently accumulates at sites of DNA damage (By similarity). More concentrated in nuclei than in cytoplasm in germinal vesicle (GV) stage oocytes, zygotes and the 2-cell stage, but distributed in the cytoplasm at the MII-stage oocytes (PubMed:24357321).</text>
</comment>
<comment type="tissue specificity">
    <text evidence="4 6 9">Widely expressed. Expressed in pregnant, lactating and involuting mammary gland. Expressed in oocytes (at protein level) (PubMed:24357321).</text>
</comment>
<comment type="developmental stage">
    <text evidence="4 6">Expressed in germinal vesicle (GV) stage and MII-stage oocytes and zygotes. Expression then decreases from 2-cell stage to blastula (PubMed:24357321). Widely expressed at 8.5 dpc, 9.5 dpc, 12.5 dpc, and 19.5 dpc (PubMed:10574459).</text>
</comment>
<comment type="domain">
    <text evidence="2">The core of the protein consists of three WD40 beta-propeller domains.</text>
</comment>
<comment type="PTM">
    <text evidence="5">Phosphorylated by ABL1.</text>
</comment>
<comment type="PTM">
    <text evidence="2">Ubiquitinated by CUL4A. Subsequently degraded by ubiquitin-dependent proteolysis.</text>
</comment>
<comment type="PTM">
    <text evidence="2">Acetylated, promoting interaction with CUL4 (CUL4A or CUL4B) and subsequent formation of DCX (DDB1-CUL4-X-box) E3 ubiquitin-protein ligase complexes. Deacetylation by SIRT7 impairs the interaction with CUL4 (CUL4A or CUL4B) and formation of DCX (DDB1-CUL4-X-box) E3 ubiquitin-protein ligase complexes.</text>
</comment>
<comment type="disruption phenotype">
    <text evidence="9">Mice showed impaired gluconeogenesis in the liver.</text>
</comment>
<comment type="similarity">
    <text evidence="13">Belongs to the DDB1 family.</text>
</comment>
<reference key="1">
    <citation type="journal article" date="1999" name="DNA Res.">
        <title>cDNA cloning, tissue expression, and chromosomal assignment of a mouse gene, encoding a 127 kDa UV-damaged DNA binding protein which is defective in XPE cells.</title>
        <authorList>
            <person name="Seki N."/>
            <person name="Hayashi A."/>
            <person name="Hattori A."/>
            <person name="Kozuma S."/>
            <person name="Sasaki M."/>
            <person name="Suzuki Y."/>
            <person name="Sugano S."/>
            <person name="Muramatsu M."/>
            <person name="Saito T."/>
        </authorList>
    </citation>
    <scope>NUCLEOTIDE SEQUENCE [MRNA]</scope>
    <scope>TISSUE SPECIFICITY</scope>
    <scope>DEVELOPMENTAL STAGE</scope>
    <source>
        <tissue>Fetal brain</tissue>
    </source>
</reference>
<reference key="2">
    <citation type="submission" date="1999-06" db="EMBL/GenBank/DDBJ databases">
        <authorList>
            <person name="Zhang L."/>
            <person name="Sabatinos S.A."/>
            <person name="Richardson C.D."/>
        </authorList>
    </citation>
    <scope>NUCLEOTIDE SEQUENCE [MRNA]</scope>
    <source>
        <tissue>Spleen</tissue>
    </source>
</reference>
<reference key="3">
    <citation type="journal article" date="2005" name="Science">
        <title>The transcriptional landscape of the mammalian genome.</title>
        <authorList>
            <person name="Carninci P."/>
            <person name="Kasukawa T."/>
            <person name="Katayama S."/>
            <person name="Gough J."/>
            <person name="Frith M.C."/>
            <person name="Maeda N."/>
            <person name="Oyama R."/>
            <person name="Ravasi T."/>
            <person name="Lenhard B."/>
            <person name="Wells C."/>
            <person name="Kodzius R."/>
            <person name="Shimokawa K."/>
            <person name="Bajic V.B."/>
            <person name="Brenner S.E."/>
            <person name="Batalov S."/>
            <person name="Forrest A.R."/>
            <person name="Zavolan M."/>
            <person name="Davis M.J."/>
            <person name="Wilming L.G."/>
            <person name="Aidinis V."/>
            <person name="Allen J.E."/>
            <person name="Ambesi-Impiombato A."/>
            <person name="Apweiler R."/>
            <person name="Aturaliya R.N."/>
            <person name="Bailey T.L."/>
            <person name="Bansal M."/>
            <person name="Baxter L."/>
            <person name="Beisel K.W."/>
            <person name="Bersano T."/>
            <person name="Bono H."/>
            <person name="Chalk A.M."/>
            <person name="Chiu K.P."/>
            <person name="Choudhary V."/>
            <person name="Christoffels A."/>
            <person name="Clutterbuck D.R."/>
            <person name="Crowe M.L."/>
            <person name="Dalla E."/>
            <person name="Dalrymple B.P."/>
            <person name="de Bono B."/>
            <person name="Della Gatta G."/>
            <person name="di Bernardo D."/>
            <person name="Down T."/>
            <person name="Engstrom P."/>
            <person name="Fagiolini M."/>
            <person name="Faulkner G."/>
            <person name="Fletcher C.F."/>
            <person name="Fukushima T."/>
            <person name="Furuno M."/>
            <person name="Futaki S."/>
            <person name="Gariboldi M."/>
            <person name="Georgii-Hemming P."/>
            <person name="Gingeras T.R."/>
            <person name="Gojobori T."/>
            <person name="Green R.E."/>
            <person name="Gustincich S."/>
            <person name="Harbers M."/>
            <person name="Hayashi Y."/>
            <person name="Hensch T.K."/>
            <person name="Hirokawa N."/>
            <person name="Hill D."/>
            <person name="Huminiecki L."/>
            <person name="Iacono M."/>
            <person name="Ikeo K."/>
            <person name="Iwama A."/>
            <person name="Ishikawa T."/>
            <person name="Jakt M."/>
            <person name="Kanapin A."/>
            <person name="Katoh M."/>
            <person name="Kawasawa Y."/>
            <person name="Kelso J."/>
            <person name="Kitamura H."/>
            <person name="Kitano H."/>
            <person name="Kollias G."/>
            <person name="Krishnan S.P."/>
            <person name="Kruger A."/>
            <person name="Kummerfeld S.K."/>
            <person name="Kurochkin I.V."/>
            <person name="Lareau L.F."/>
            <person name="Lazarevic D."/>
            <person name="Lipovich L."/>
            <person name="Liu J."/>
            <person name="Liuni S."/>
            <person name="McWilliam S."/>
            <person name="Madan Babu M."/>
            <person name="Madera M."/>
            <person name="Marchionni L."/>
            <person name="Matsuda H."/>
            <person name="Matsuzawa S."/>
            <person name="Miki H."/>
            <person name="Mignone F."/>
            <person name="Miyake S."/>
            <person name="Morris K."/>
            <person name="Mottagui-Tabar S."/>
            <person name="Mulder N."/>
            <person name="Nakano N."/>
            <person name="Nakauchi H."/>
            <person name="Ng P."/>
            <person name="Nilsson R."/>
            <person name="Nishiguchi S."/>
            <person name="Nishikawa S."/>
            <person name="Nori F."/>
            <person name="Ohara O."/>
            <person name="Okazaki Y."/>
            <person name="Orlando V."/>
            <person name="Pang K.C."/>
            <person name="Pavan W.J."/>
            <person name="Pavesi G."/>
            <person name="Pesole G."/>
            <person name="Petrovsky N."/>
            <person name="Piazza S."/>
            <person name="Reed J."/>
            <person name="Reid J.F."/>
            <person name="Ring B.Z."/>
            <person name="Ringwald M."/>
            <person name="Rost B."/>
            <person name="Ruan Y."/>
            <person name="Salzberg S.L."/>
            <person name="Sandelin A."/>
            <person name="Schneider C."/>
            <person name="Schoenbach C."/>
            <person name="Sekiguchi K."/>
            <person name="Semple C.A."/>
            <person name="Seno S."/>
            <person name="Sessa L."/>
            <person name="Sheng Y."/>
            <person name="Shibata Y."/>
            <person name="Shimada H."/>
            <person name="Shimada K."/>
            <person name="Silva D."/>
            <person name="Sinclair B."/>
            <person name="Sperling S."/>
            <person name="Stupka E."/>
            <person name="Sugiura K."/>
            <person name="Sultana R."/>
            <person name="Takenaka Y."/>
            <person name="Taki K."/>
            <person name="Tammoja K."/>
            <person name="Tan S.L."/>
            <person name="Tang S."/>
            <person name="Taylor M.S."/>
            <person name="Tegner J."/>
            <person name="Teichmann S.A."/>
            <person name="Ueda H.R."/>
            <person name="van Nimwegen E."/>
            <person name="Verardo R."/>
            <person name="Wei C.L."/>
            <person name="Yagi K."/>
            <person name="Yamanishi H."/>
            <person name="Zabarovsky E."/>
            <person name="Zhu S."/>
            <person name="Zimmer A."/>
            <person name="Hide W."/>
            <person name="Bult C."/>
            <person name="Grimmond S.M."/>
            <person name="Teasdale R.D."/>
            <person name="Liu E.T."/>
            <person name="Brusic V."/>
            <person name="Quackenbush J."/>
            <person name="Wahlestedt C."/>
            <person name="Mattick J.S."/>
            <person name="Hume D.A."/>
            <person name="Kai C."/>
            <person name="Sasaki D."/>
            <person name="Tomaru Y."/>
            <person name="Fukuda S."/>
            <person name="Kanamori-Katayama M."/>
            <person name="Suzuki M."/>
            <person name="Aoki J."/>
            <person name="Arakawa T."/>
            <person name="Iida J."/>
            <person name="Imamura K."/>
            <person name="Itoh M."/>
            <person name="Kato T."/>
            <person name="Kawaji H."/>
            <person name="Kawagashira N."/>
            <person name="Kawashima T."/>
            <person name="Kojima M."/>
            <person name="Kondo S."/>
            <person name="Konno H."/>
            <person name="Nakano K."/>
            <person name="Ninomiya N."/>
            <person name="Nishio T."/>
            <person name="Okada M."/>
            <person name="Plessy C."/>
            <person name="Shibata K."/>
            <person name="Shiraki T."/>
            <person name="Suzuki S."/>
            <person name="Tagami M."/>
            <person name="Waki K."/>
            <person name="Watahiki A."/>
            <person name="Okamura-Oho Y."/>
            <person name="Suzuki H."/>
            <person name="Kawai J."/>
            <person name="Hayashizaki Y."/>
        </authorList>
    </citation>
    <scope>NUCLEOTIDE SEQUENCE [LARGE SCALE MRNA]</scope>
    <source>
        <strain>C57BL/6J</strain>
        <strain>NOD</strain>
        <tissue>Amnion</tissue>
        <tissue>Bone marrow</tissue>
        <tissue>Spleen</tissue>
    </source>
</reference>
<reference key="4">
    <citation type="journal article" date="2004" name="Genome Res.">
        <title>The status, quality, and expansion of the NIH full-length cDNA project: the Mammalian Gene Collection (MGC).</title>
        <authorList>
            <consortium name="The MGC Project Team"/>
        </authorList>
    </citation>
    <scope>NUCLEOTIDE SEQUENCE [LARGE SCALE MRNA]</scope>
    <source>
        <tissue>Mammary tumor</tissue>
    </source>
</reference>
<reference key="5">
    <citation type="journal article" date="2002" name="J. Biol. Chem.">
        <title>Interaction between UV-damaged DNA binding activity proteins and the c-Abl tyrosine kinase.</title>
        <authorList>
            <person name="Cong F."/>
            <person name="Tang J."/>
            <person name="Hwang B.J."/>
            <person name="Vuong B.Q."/>
            <person name="Chu G."/>
            <person name="Goff S.P."/>
        </authorList>
    </citation>
    <scope>FUNCTION</scope>
    <scope>INTERACTION WITH DDB2</scope>
    <scope>PHOSPHORYLATION</scope>
</reference>
<reference key="6">
    <citation type="journal article" date="2007" name="Proc. Natl. Acad. Sci. U.S.A.">
        <title>Large-scale phosphorylation analysis of mouse liver.</title>
        <authorList>
            <person name="Villen J."/>
            <person name="Beausoleil S.A."/>
            <person name="Gerber S.A."/>
            <person name="Gygi S.P."/>
        </authorList>
    </citation>
    <scope>IDENTIFICATION BY MASS SPECTROMETRY [LARGE SCALE ANALYSIS]</scope>
    <source>
        <tissue>Liver</tissue>
    </source>
</reference>
<reference key="7">
    <citation type="journal article" date="2010" name="Cell">
        <title>A tissue-specific atlas of mouse protein phosphorylation and expression.</title>
        <authorList>
            <person name="Huttlin E.L."/>
            <person name="Jedrychowski M.P."/>
            <person name="Elias J.E."/>
            <person name="Goswami T."/>
            <person name="Rad R."/>
            <person name="Beausoleil S.A."/>
            <person name="Villen J."/>
            <person name="Haas W."/>
            <person name="Sowa M.E."/>
            <person name="Gygi S.P."/>
        </authorList>
    </citation>
    <scope>IDENTIFICATION BY MASS SPECTROMETRY [LARGE SCALE ANALYSIS]</scope>
    <source>
        <tissue>Brain</tissue>
        <tissue>Brown adipose tissue</tissue>
        <tissue>Heart</tissue>
        <tissue>Kidney</tissue>
        <tissue>Liver</tissue>
        <tissue>Lung</tissue>
        <tissue>Pancreas</tissue>
        <tissue>Spleen</tissue>
        <tissue>Testis</tissue>
    </source>
</reference>
<reference key="8">
    <citation type="journal article" date="2013" name="Science">
        <title>CRL4 complex regulates mammalian oocyte survival and reprogramming by activation of TET proteins.</title>
        <authorList>
            <person name="Yu C."/>
            <person name="Zhang Y.L."/>
            <person name="Pan W.W."/>
            <person name="Li X.M."/>
            <person name="Wang Z.W."/>
            <person name="Ge Z.J."/>
            <person name="Zhou J.J."/>
            <person name="Cang Y."/>
            <person name="Tong C."/>
            <person name="Sun Q.Y."/>
            <person name="Fan H.Y."/>
        </authorList>
    </citation>
    <scope>FUNCTION</scope>
    <scope>SUBCELLULAR LOCATION</scope>
    <scope>TISSUE SPECIFICITY</scope>
    <scope>DEVELOPMENTAL STAGE</scope>
</reference>
<reference key="9">
    <citation type="journal article" date="2015" name="PLoS ONE">
        <title>CUL4-DDB1-CDT2 E3 ligase regulates the molecular clock activity by promoting ubiquitination-dependent degradation of the mammalian CRY1.</title>
        <authorList>
            <person name="Tong X."/>
            <person name="Zhang D."/>
            <person name="Guha A."/>
            <person name="Arthurs B."/>
            <person name="Cazares V."/>
            <person name="Gupta N."/>
            <person name="Yin L."/>
        </authorList>
    </citation>
    <scope>FUNCTION</scope>
</reference>
<reference key="10">
    <citation type="journal article" date="2016" name="PLoS ONE">
        <title>USP7 and TDP-43: pleiotropic regulation of cryptochrome protein stability paces the oscillation of the mammalian circadian clock.</title>
        <authorList>
            <person name="Hirano A."/>
            <person name="Nakagawa T."/>
            <person name="Yoshitane H."/>
            <person name="Oyama M."/>
            <person name="Kozuka-Hata H."/>
            <person name="Lanjakornsiripan D."/>
            <person name="Fukada Y."/>
        </authorList>
    </citation>
    <scope>INTERACTION WITH CRY1 AND CRY2</scope>
</reference>
<reference key="11">
    <citation type="journal article" date="2017" name="Diabetes">
        <title>DDB1-mediated CRY1 degradation promotes FOXO1-driven gluconeogenesis in liver.</title>
        <authorList>
            <person name="Tong X."/>
            <person name="Zhang D."/>
            <person name="Charney N."/>
            <person name="Jin E."/>
            <person name="VanDommelen K."/>
            <person name="Stamper K."/>
            <person name="Gupta N."/>
            <person name="Saldate J."/>
            <person name="Yin L."/>
        </authorList>
    </citation>
    <scope>FUNCTION</scope>
    <scope>TISSUE SPECIFICITY</scope>
    <scope>DISRUPTION PHENOTYPE</scope>
</reference>
<reference key="12">
    <citation type="journal article" date="2018" name="EMBO J.">
        <title>DCAF13 promotes pluripotency by negatively regulating SUV39H1 stability during early embryonic development.</title>
        <authorList>
            <person name="Zhang Y.L."/>
            <person name="Zhao L.W."/>
            <person name="Zhang J."/>
            <person name="Le R."/>
            <person name="Ji S.Y."/>
            <person name="Chen C."/>
            <person name="Gao Y."/>
            <person name="Li D."/>
            <person name="Gao S."/>
            <person name="Fan H.Y."/>
        </authorList>
    </citation>
    <scope>IDENTIFICATION IN THE DCX(DCAF13) COMPLEX</scope>
    <scope>INTERACTION WITH DCAF13</scope>
</reference>
<reference key="13">
    <citation type="journal article" date="2020" name="Cell. Mol. Life Sci.">
        <title>The CRL4-DCAF13 ubiquitin E3 ligase supports oocyte meiotic resumption by targeting PTEN degradation.</title>
        <authorList>
            <person name="Zhang J."/>
            <person name="Zhang Y.L."/>
            <person name="Zhao L.W."/>
            <person name="Pi S.B."/>
            <person name="Zhang S.Y."/>
            <person name="Tong C."/>
            <person name="Fan H.Y."/>
        </authorList>
    </citation>
    <scope>IDENTIFICATION IN THE DCX(DCAF13) COMPLEX</scope>
    <scope>INTERACTION WITH DCAF13</scope>
</reference>
<reference key="14">
    <citation type="journal article" date="2022" name="Cancer Sci.">
        <title>DCAF13 promotes breast cancer cell proliferation by ubiquitin inhibiting PERP expression.</title>
        <authorList>
            <person name="Shan B.Q."/>
            <person name="Wang X.M."/>
            <person name="Zheng L."/>
            <person name="Han Y."/>
            <person name="Gao J."/>
            <person name="Lv M.D."/>
            <person name="Zhang Y."/>
            <person name="Liu Y.X."/>
            <person name="Zhang H."/>
            <person name="Chen H.S."/>
            <person name="Ao L."/>
            <person name="Zhang Y.L."/>
            <person name="Lu X."/>
            <person name="Wu Z.J."/>
            <person name="Xu Y."/>
            <person name="Che X."/>
            <person name="Heger M."/>
            <person name="Cheng S.Q."/>
            <person name="Pan W.W."/>
            <person name="Zhang X."/>
        </authorList>
    </citation>
    <scope>FUNCTION</scope>
    <scope>IDENTIFICATION IN THE DCX(DCAF13) COMPLEX</scope>
</reference>
<gene>
    <name type="primary">Ddb1</name>
</gene>
<name>DDB1_MOUSE</name>
<evidence type="ECO:0000250" key="1"/>
<evidence type="ECO:0000250" key="2">
    <source>
        <dbReference type="UniProtKB" id="Q16531"/>
    </source>
</evidence>
<evidence type="ECO:0000250" key="3">
    <source>
        <dbReference type="UniProtKB" id="Q9ESW0"/>
    </source>
</evidence>
<evidence type="ECO:0000269" key="4">
    <source>
    </source>
</evidence>
<evidence type="ECO:0000269" key="5">
    <source>
    </source>
</evidence>
<evidence type="ECO:0000269" key="6">
    <source>
    </source>
</evidence>
<evidence type="ECO:0000269" key="7">
    <source>
    </source>
</evidence>
<evidence type="ECO:0000269" key="8">
    <source>
    </source>
</evidence>
<evidence type="ECO:0000269" key="9">
    <source>
    </source>
</evidence>
<evidence type="ECO:0000269" key="10">
    <source>
    </source>
</evidence>
<evidence type="ECO:0000269" key="11">
    <source>
    </source>
</evidence>
<evidence type="ECO:0000269" key="12">
    <source>
    </source>
</evidence>
<evidence type="ECO:0000305" key="13"/>
<sequence>MSYNYVVTAQKPTAVNGCVTGHFTSAEDLNLLIAKNTRLEIYVVTAEGLRPVKEVGMYGKIAVMELFRPKGESKDLLFILTAKYNACILEYKQSGESIDIITRAHGNVQDRIGRPSETGIIGIIDPECRMIGLRLYDGLFKVIPLDRDNKELKAFNIRLEELHVIDVKFLYGCQAPTICFVYQDPQGRHVKTYEVSLREKEFNKGPWKQENVEAEASMVIAVPEPFGGAIIIGQESITYHNGDKYLAIAPPIIKQSTIVCHNRVDPNGSRYLLGDMEGRLFMLLLEKEEQMDGTVTLKDLRVELLGETSIAECLTYLDNGVVFVGSRLGDSQLVKLNVDSNEQGSYVVAMETFTNLGPIVDMCVVDLERQGQGQLVTCSGAFKEGSLRIIRNGIGIHEHASIDLPGIKGLWPLRSDPGRETDDTLVLSFVGQTRVLMLNGEEVEETELMGFVDDQQTFFCGNVAHQQLIQITSASVRLVSQEPKALVSEWKEPQGKNISVASCNSSQVVVAVGRALYYLQIHPQELRQISHTEMEHEVACLDITPLGDSNGLSPLCAIGLWTDISARILKLPSFELLHKEMLGGEIIPRSILMTTFESSHYLLCALGDGALFYFGLNIETGLLSDRKKVTLGTQPTVLRTFRSLSTTNVFACSDRPTVIYSSNHKLVFSNVNLKEVNYMCPLNSDGYPDSLALANNSTLTIGTIDEIQKLHIRTVPLYESPRKICYQEVSQCFGVLSSRIEVQDSSGGTTALRPSASTQALSSSVSSSKLFSSSTAPHETSFGEEVEVHNLLIIDQHTFEVLHAHQFLQNEYALSLVSCKLGKDPNTYFIVGTAMVYPEEAEPKQGRIVVFQYSDGKLQTVAEKEVKGAVYSMVEFNGKLLASINSTVRLYEWTTEKELRTECNHYNNIMALYLKTKGDFILVGDLMRSVLLLAYKPMEGNFEEIARDFNPNWMSAVEILDDDNFLGAENAFNLFVCQKDSAATTDEERQHLQEVGLFHLGEFVNVFCHGSLVMQNLGEASTPTQGSVLFGTVNGMIGLVTSLSESWYNLLLDMQNRLNKVIKSVGKIEHSFWRSFHTERKTEPATGFIDGDLIESFLDISRPKMQEVVANLQYDDGSGMKREATADDLIKVVEELTRIH</sequence>
<keyword id="KW-0007">Acetylation</keyword>
<keyword id="KW-0090">Biological rhythms</keyword>
<keyword id="KW-0963">Cytoplasm</keyword>
<keyword id="KW-0227">DNA damage</keyword>
<keyword id="KW-0234">DNA repair</keyword>
<keyword id="KW-0238">DNA-binding</keyword>
<keyword id="KW-1017">Isopeptide bond</keyword>
<keyword id="KW-0539">Nucleus</keyword>
<keyword id="KW-0597">Phosphoprotein</keyword>
<keyword id="KW-1185">Reference proteome</keyword>
<keyword id="KW-0677">Repeat</keyword>
<keyword id="KW-0832">Ubl conjugation</keyword>
<keyword id="KW-0833">Ubl conjugation pathway</keyword>
<organism>
    <name type="scientific">Mus musculus</name>
    <name type="common">Mouse</name>
    <dbReference type="NCBI Taxonomy" id="10090"/>
    <lineage>
        <taxon>Eukaryota</taxon>
        <taxon>Metazoa</taxon>
        <taxon>Chordata</taxon>
        <taxon>Craniata</taxon>
        <taxon>Vertebrata</taxon>
        <taxon>Euteleostomi</taxon>
        <taxon>Mammalia</taxon>
        <taxon>Eutheria</taxon>
        <taxon>Euarchontoglires</taxon>
        <taxon>Glires</taxon>
        <taxon>Rodentia</taxon>
        <taxon>Myomorpha</taxon>
        <taxon>Muroidea</taxon>
        <taxon>Muridae</taxon>
        <taxon>Murinae</taxon>
        <taxon>Mus</taxon>
        <taxon>Mus</taxon>
    </lineage>
</organism>
<feature type="initiator methionine" description="Removed" evidence="2">
    <location>
        <position position="1"/>
    </location>
</feature>
<feature type="chain" id="PRO_0000281036" description="DNA damage-binding protein 1">
    <location>
        <begin position="2"/>
        <end position="1140"/>
    </location>
</feature>
<feature type="region of interest" description="Interaction with CDT1" evidence="1">
    <location>
        <begin position="2"/>
        <end position="768"/>
    </location>
</feature>
<feature type="region of interest" description="WD repeat beta-propeller A" evidence="1">
    <location>
        <begin position="13"/>
        <end position="356"/>
    </location>
</feature>
<feature type="region of interest" description="WD repeat beta-propeller B; Interaction with CUL4A" evidence="1">
    <location>
        <begin position="391"/>
        <end position="708"/>
    </location>
</feature>
<feature type="region of interest" description="WD repeat beta-propeller C" evidence="1">
    <location>
        <begin position="709"/>
        <end position="1043"/>
    </location>
</feature>
<feature type="region of interest" description="Interaction with CDT1 and CUL4A" evidence="1">
    <location>
        <begin position="771"/>
        <end position="1140"/>
    </location>
</feature>
<feature type="modified residue" description="N-acetylserine" evidence="2">
    <location>
        <position position="2"/>
    </location>
</feature>
<feature type="modified residue" description="N6-acetyllysine" evidence="2">
    <location>
        <position position="1067"/>
    </location>
</feature>
<feature type="modified residue" description="Phosphothreonine" evidence="3">
    <location>
        <position position="1125"/>
    </location>
</feature>
<feature type="cross-link" description="Glycyl lysine isopeptide (Lys-Gly) (interchain with G-Cter in SUMO2)" evidence="2">
    <location>
        <position position="1121"/>
    </location>
</feature>
<feature type="sequence conflict" description="In Ref. 2; AAD42230." evidence="13" ref="2">
    <original>E</original>
    <variation>K</variation>
    <location>
        <position position="40"/>
    </location>
</feature>
<feature type="sequence conflict" description="In Ref. 2; AAD42230." evidence="13" ref="2">
    <original>L</original>
    <variation>P</variation>
    <location>
        <position position="297"/>
    </location>
</feature>
<feature type="sequence conflict" description="In Ref. 2; AAD42230." evidence="13" ref="2">
    <original>H</original>
    <variation>R</variation>
    <location>
        <position position="600"/>
    </location>
</feature>
<feature type="sequence conflict" description="In Ref. 3; BAE32502." evidence="13" ref="3">
    <original>Y</original>
    <variation>C</variation>
    <location>
        <position position="601"/>
    </location>
</feature>
<feature type="sequence conflict" description="In Ref. 3; BAE27231." evidence="13" ref="3">
    <original>D</original>
    <variation>N</variation>
    <location>
        <position position="689"/>
    </location>
</feature>
<feature type="sequence conflict" description="In Ref. 3; BAE32502." evidence="13" ref="3">
    <original>V</original>
    <variation>D</variation>
    <location>
        <position position="715"/>
    </location>
</feature>
<feature type="sequence conflict" description="In Ref. 3; BAE32502." evidence="13" ref="3">
    <original>D</original>
    <variation>G</variation>
    <location>
        <position position="795"/>
    </location>
</feature>
<feature type="sequence conflict" description="In Ref. 3; BAE32502." evidence="13" ref="3">
    <original>Q</original>
    <variation>L</variation>
    <location>
        <position position="845"/>
    </location>
</feature>
<feature type="sequence conflict" description="In Ref. 3; BAE33503." evidence="13" ref="3">
    <original>K</original>
    <variation>R</variation>
    <location>
        <position position="979"/>
    </location>
</feature>
<protein>
    <recommendedName>
        <fullName>DNA damage-binding protein 1</fullName>
    </recommendedName>
    <alternativeName>
        <fullName>DDB p127 subunit</fullName>
    </alternativeName>
    <alternativeName>
        <fullName>Damage-specific DNA-binding protein 1</fullName>
    </alternativeName>
    <alternativeName>
        <fullName>UV-damaged DNA-binding factor</fullName>
    </alternativeName>
</protein>
<accession>Q3U1J4</accession>
<accession>Q3U4D0</accession>
<accession>Q3U8G3</accession>
<accession>Q3UJC4</accession>
<accession>Q99LV3</accession>
<accession>Q9QYK0</accession>
<accession>Q9WV39</accession>
<dbReference type="EMBL" id="AB026432">
    <property type="protein sequence ID" value="BAA84699.1"/>
    <property type="molecule type" value="mRNA"/>
</dbReference>
<dbReference type="EMBL" id="AF159853">
    <property type="protein sequence ID" value="AAD42230.1"/>
    <property type="molecule type" value="mRNA"/>
</dbReference>
<dbReference type="EMBL" id="AK146522">
    <property type="protein sequence ID" value="BAE27231.1"/>
    <property type="molecule type" value="mRNA"/>
</dbReference>
<dbReference type="EMBL" id="AK152228">
    <property type="protein sequence ID" value="BAE31055.1"/>
    <property type="molecule type" value="mRNA"/>
</dbReference>
<dbReference type="EMBL" id="AK154303">
    <property type="protein sequence ID" value="BAE32502.1"/>
    <property type="molecule type" value="mRNA"/>
</dbReference>
<dbReference type="EMBL" id="AK155020">
    <property type="protein sequence ID" value="BAE32993.1"/>
    <property type="molecule type" value="mRNA"/>
</dbReference>
<dbReference type="EMBL" id="AK155920">
    <property type="protein sequence ID" value="BAE33503.1"/>
    <property type="molecule type" value="mRNA"/>
</dbReference>
<dbReference type="EMBL" id="AK157491">
    <property type="protein sequence ID" value="BAE34102.1"/>
    <property type="molecule type" value="mRNA"/>
</dbReference>
<dbReference type="EMBL" id="BC002210">
    <property type="protein sequence ID" value="AAH02210.1"/>
    <property type="molecule type" value="mRNA"/>
</dbReference>
<dbReference type="EMBL" id="BC009661">
    <property type="protein sequence ID" value="AAH09661.1"/>
    <property type="molecule type" value="mRNA"/>
</dbReference>
<dbReference type="CCDS" id="CCDS37915.1"/>
<dbReference type="PIR" id="JC7152">
    <property type="entry name" value="JC7152"/>
</dbReference>
<dbReference type="RefSeq" id="NP_056550.1">
    <property type="nucleotide sequence ID" value="NM_015735.3"/>
</dbReference>
<dbReference type="SMR" id="Q3U1J4"/>
<dbReference type="BioGRID" id="199074">
    <property type="interactions" value="191"/>
</dbReference>
<dbReference type="ComplexPortal" id="CPX-1122">
    <property type="entry name" value="UV DNA damage recognition complex DBB1-DBB2"/>
</dbReference>
<dbReference type="ComplexPortal" id="CPX-650">
    <property type="entry name" value="CRL4-DDB2 E3 ubiquitin ligase complex, CUL4A variant"/>
</dbReference>
<dbReference type="ComplexPortal" id="CPX-651">
    <property type="entry name" value="CRL4-DDB2 E3 ubiquitin ligase complex, CUL4B variant"/>
</dbReference>
<dbReference type="DIP" id="DIP-56812N"/>
<dbReference type="FunCoup" id="Q3U1J4">
    <property type="interactions" value="3631"/>
</dbReference>
<dbReference type="IntAct" id="Q3U1J4">
    <property type="interactions" value="71"/>
</dbReference>
<dbReference type="MINT" id="Q3U1J4"/>
<dbReference type="STRING" id="10090.ENSMUSP00000025649"/>
<dbReference type="GlyGen" id="Q3U1J4">
    <property type="glycosylation" value="2 sites, 1 N-linked glycan (1 site), 1 O-linked glycan (1 site)"/>
</dbReference>
<dbReference type="iPTMnet" id="Q3U1J4"/>
<dbReference type="PhosphoSitePlus" id="Q3U1J4"/>
<dbReference type="SwissPalm" id="Q3U1J4"/>
<dbReference type="jPOST" id="Q3U1J4"/>
<dbReference type="PaxDb" id="10090-ENSMUSP00000025649"/>
<dbReference type="PeptideAtlas" id="Q3U1J4"/>
<dbReference type="ProteomicsDB" id="279610"/>
<dbReference type="Pumba" id="Q3U1J4"/>
<dbReference type="Antibodypedia" id="14613">
    <property type="antibodies" value="528 antibodies from 46 providers"/>
</dbReference>
<dbReference type="Ensembl" id="ENSMUST00000025649.10">
    <property type="protein sequence ID" value="ENSMUSP00000025649.9"/>
    <property type="gene ID" value="ENSMUSG00000024740.11"/>
</dbReference>
<dbReference type="GeneID" id="13194"/>
<dbReference type="KEGG" id="mmu:13194"/>
<dbReference type="UCSC" id="uc008gqm.1">
    <property type="organism name" value="mouse"/>
</dbReference>
<dbReference type="AGR" id="MGI:1202384"/>
<dbReference type="CTD" id="1642"/>
<dbReference type="MGI" id="MGI:1202384">
    <property type="gene designation" value="Ddb1"/>
</dbReference>
<dbReference type="VEuPathDB" id="HostDB:ENSMUSG00000024740"/>
<dbReference type="eggNOG" id="KOG1897">
    <property type="taxonomic scope" value="Eukaryota"/>
</dbReference>
<dbReference type="GeneTree" id="ENSGT00950000183151"/>
<dbReference type="HOGENOM" id="CLU_002893_0_1_1"/>
<dbReference type="InParanoid" id="Q3U1J4"/>
<dbReference type="OMA" id="HQDFLMR"/>
<dbReference type="OrthoDB" id="433457at2759"/>
<dbReference type="PhylomeDB" id="Q3U1J4"/>
<dbReference type="TreeFam" id="TF105840"/>
<dbReference type="Reactome" id="R-MMU-110314">
    <property type="pathway name" value="Recognition of DNA damage by PCNA-containing replication complex"/>
</dbReference>
<dbReference type="Reactome" id="R-MMU-5696394">
    <property type="pathway name" value="DNA Damage Recognition in GG-NER"/>
</dbReference>
<dbReference type="Reactome" id="R-MMU-5696395">
    <property type="pathway name" value="Formation of Incision Complex in GG-NER"/>
</dbReference>
<dbReference type="Reactome" id="R-MMU-5696400">
    <property type="pathway name" value="Dual Incision in GG-NER"/>
</dbReference>
<dbReference type="Reactome" id="R-MMU-6781823">
    <property type="pathway name" value="Formation of TC-NER Pre-Incision Complex"/>
</dbReference>
<dbReference type="Reactome" id="R-MMU-6782135">
    <property type="pathway name" value="Dual incision in TC-NER"/>
</dbReference>
<dbReference type="Reactome" id="R-MMU-6782210">
    <property type="pathway name" value="Gap-filling DNA repair synthesis and ligation in TC-NER"/>
</dbReference>
<dbReference type="Reactome" id="R-MMU-8951664">
    <property type="pathway name" value="Neddylation"/>
</dbReference>
<dbReference type="UniPathway" id="UPA00143"/>
<dbReference type="BioGRID-ORCS" id="13194">
    <property type="hits" value="29 hits in 116 CRISPR screens"/>
</dbReference>
<dbReference type="ChiTaRS" id="Ddb1">
    <property type="organism name" value="mouse"/>
</dbReference>
<dbReference type="PRO" id="PR:Q3U1J4"/>
<dbReference type="Proteomes" id="UP000000589">
    <property type="component" value="Chromosome 19"/>
</dbReference>
<dbReference type="RNAct" id="Q3U1J4">
    <property type="molecule type" value="protein"/>
</dbReference>
<dbReference type="Bgee" id="ENSMUSG00000024740">
    <property type="expression patterns" value="Expressed in ileal epithelium and 273 other cell types or tissues"/>
</dbReference>
<dbReference type="ExpressionAtlas" id="Q3U1J4">
    <property type="expression patterns" value="baseline and differential"/>
</dbReference>
<dbReference type="GO" id="GO:0080008">
    <property type="term" value="C:Cul4-RING E3 ubiquitin ligase complex"/>
    <property type="evidence" value="ECO:0000314"/>
    <property type="project" value="UniProtKB"/>
</dbReference>
<dbReference type="GO" id="GO:0031464">
    <property type="term" value="C:Cul4A-RING E3 ubiquitin ligase complex"/>
    <property type="evidence" value="ECO:0000269"/>
    <property type="project" value="ComplexPortal"/>
</dbReference>
<dbReference type="GO" id="GO:0031465">
    <property type="term" value="C:Cul4B-RING E3 ubiquitin ligase complex"/>
    <property type="evidence" value="ECO:0000250"/>
    <property type="project" value="UniProtKB"/>
</dbReference>
<dbReference type="GO" id="GO:0005737">
    <property type="term" value="C:cytoplasm"/>
    <property type="evidence" value="ECO:0000250"/>
    <property type="project" value="UniProtKB"/>
</dbReference>
<dbReference type="GO" id="GO:0005730">
    <property type="term" value="C:nucleolus"/>
    <property type="evidence" value="ECO:0007669"/>
    <property type="project" value="Ensembl"/>
</dbReference>
<dbReference type="GO" id="GO:0005654">
    <property type="term" value="C:nucleoplasm"/>
    <property type="evidence" value="ECO:0007669"/>
    <property type="project" value="Ensembl"/>
</dbReference>
<dbReference type="GO" id="GO:0005634">
    <property type="term" value="C:nucleus"/>
    <property type="evidence" value="ECO:0000250"/>
    <property type="project" value="UniProtKB"/>
</dbReference>
<dbReference type="GO" id="GO:0097602">
    <property type="term" value="F:cullin family protein binding"/>
    <property type="evidence" value="ECO:0007669"/>
    <property type="project" value="Ensembl"/>
</dbReference>
<dbReference type="GO" id="GO:0003684">
    <property type="term" value="F:damaged DNA binding"/>
    <property type="evidence" value="ECO:0007669"/>
    <property type="project" value="Ensembl"/>
</dbReference>
<dbReference type="GO" id="GO:0044877">
    <property type="term" value="F:protein-containing complex binding"/>
    <property type="evidence" value="ECO:0007669"/>
    <property type="project" value="Ensembl"/>
</dbReference>
<dbReference type="GO" id="GO:0160072">
    <property type="term" value="F:ubiquitin ligase complex scaffold activity"/>
    <property type="evidence" value="ECO:0007669"/>
    <property type="project" value="Ensembl"/>
</dbReference>
<dbReference type="GO" id="GO:0071987">
    <property type="term" value="F:WD40-repeat domain binding"/>
    <property type="evidence" value="ECO:0007669"/>
    <property type="project" value="Ensembl"/>
</dbReference>
<dbReference type="GO" id="GO:0006915">
    <property type="term" value="P:apoptotic process"/>
    <property type="evidence" value="ECO:0000315"/>
    <property type="project" value="MGI"/>
</dbReference>
<dbReference type="GO" id="GO:0051702">
    <property type="term" value="P:biological process involved in interaction with symbiont"/>
    <property type="evidence" value="ECO:0007669"/>
    <property type="project" value="Ensembl"/>
</dbReference>
<dbReference type="GO" id="GO:0034644">
    <property type="term" value="P:cellular response to UV"/>
    <property type="evidence" value="ECO:0000269"/>
    <property type="project" value="ComplexPortal"/>
</dbReference>
<dbReference type="GO" id="GO:0006974">
    <property type="term" value="P:DNA damage response"/>
    <property type="evidence" value="ECO:0000269"/>
    <property type="project" value="ComplexPortal"/>
</dbReference>
<dbReference type="GO" id="GO:0035234">
    <property type="term" value="P:ectopic germ cell programmed cell death"/>
    <property type="evidence" value="ECO:0000315"/>
    <property type="project" value="MGI"/>
</dbReference>
<dbReference type="GO" id="GO:0044725">
    <property type="term" value="P:epigenetic programming in the zygotic pronuclei"/>
    <property type="evidence" value="ECO:0007669"/>
    <property type="project" value="Ensembl"/>
</dbReference>
<dbReference type="GO" id="GO:0043066">
    <property type="term" value="P:negative regulation of apoptotic process"/>
    <property type="evidence" value="ECO:0000315"/>
    <property type="project" value="MGI"/>
</dbReference>
<dbReference type="GO" id="GO:0051093">
    <property type="term" value="P:negative regulation of developmental process"/>
    <property type="evidence" value="ECO:0000315"/>
    <property type="project" value="MGI"/>
</dbReference>
<dbReference type="GO" id="GO:2000242">
    <property type="term" value="P:negative regulation of reproductive process"/>
    <property type="evidence" value="ECO:0000315"/>
    <property type="project" value="MGI"/>
</dbReference>
<dbReference type="GO" id="GO:0046726">
    <property type="term" value="P:positive regulation by virus of viral protein levels in host cell"/>
    <property type="evidence" value="ECO:0007669"/>
    <property type="project" value="Ensembl"/>
</dbReference>
<dbReference type="GO" id="GO:0045722">
    <property type="term" value="P:positive regulation of gluconeogenesis"/>
    <property type="evidence" value="ECO:0000315"/>
    <property type="project" value="UniProtKB"/>
</dbReference>
<dbReference type="GO" id="GO:0045732">
    <property type="term" value="P:positive regulation of protein catabolic process"/>
    <property type="evidence" value="ECO:0007669"/>
    <property type="project" value="Ensembl"/>
</dbReference>
<dbReference type="GO" id="GO:0045070">
    <property type="term" value="P:positive regulation of viral genome replication"/>
    <property type="evidence" value="ECO:0007669"/>
    <property type="project" value="Ensembl"/>
</dbReference>
<dbReference type="GO" id="GO:0010498">
    <property type="term" value="P:proteasomal protein catabolic process"/>
    <property type="evidence" value="ECO:0000266"/>
    <property type="project" value="MGI"/>
</dbReference>
<dbReference type="GO" id="GO:0043161">
    <property type="term" value="P:proteasome-mediated ubiquitin-dependent protein catabolic process"/>
    <property type="evidence" value="ECO:0000250"/>
    <property type="project" value="UniProtKB"/>
</dbReference>
<dbReference type="GO" id="GO:0016567">
    <property type="term" value="P:protein ubiquitination"/>
    <property type="evidence" value="ECO:0000315"/>
    <property type="project" value="UniProtKB"/>
</dbReference>
<dbReference type="GO" id="GO:0042752">
    <property type="term" value="P:regulation of circadian rhythm"/>
    <property type="evidence" value="ECO:0000315"/>
    <property type="project" value="UniProtKB"/>
</dbReference>
<dbReference type="GO" id="GO:1901990">
    <property type="term" value="P:regulation of mitotic cell cycle phase transition"/>
    <property type="evidence" value="ECO:0007669"/>
    <property type="project" value="Ensembl"/>
</dbReference>
<dbReference type="GO" id="GO:0048511">
    <property type="term" value="P:rhythmic process"/>
    <property type="evidence" value="ECO:0007669"/>
    <property type="project" value="UniProtKB-KW"/>
</dbReference>
<dbReference type="GO" id="GO:0007056">
    <property type="term" value="P:spindle assembly involved in female meiosis"/>
    <property type="evidence" value="ECO:0007669"/>
    <property type="project" value="Ensembl"/>
</dbReference>
<dbReference type="GO" id="GO:0006511">
    <property type="term" value="P:ubiquitin-dependent protein catabolic process"/>
    <property type="evidence" value="ECO:0000315"/>
    <property type="project" value="UniProtKB"/>
</dbReference>
<dbReference type="GO" id="GO:0070914">
    <property type="term" value="P:UV-damage excision repair"/>
    <property type="evidence" value="ECO:0000266"/>
    <property type="project" value="ComplexPortal"/>
</dbReference>
<dbReference type="GO" id="GO:0019076">
    <property type="term" value="P:viral release from host cell"/>
    <property type="evidence" value="ECO:0007669"/>
    <property type="project" value="Ensembl"/>
</dbReference>
<dbReference type="GO" id="GO:0016055">
    <property type="term" value="P:Wnt signaling pathway"/>
    <property type="evidence" value="ECO:0000314"/>
    <property type="project" value="MGI"/>
</dbReference>
<dbReference type="FunFam" id="1.10.150.910:FF:000001">
    <property type="entry name" value="DNA damage-binding protein 1"/>
    <property type="match status" value="1"/>
</dbReference>
<dbReference type="FunFam" id="2.130.10.10:FF:000073">
    <property type="entry name" value="DNA damage-binding protein 1"/>
    <property type="match status" value="1"/>
</dbReference>
<dbReference type="FunFam" id="2.130.10.10:FF:002576">
    <property type="entry name" value="DNA damage-binding protein 1"/>
    <property type="match status" value="1"/>
</dbReference>
<dbReference type="FunFam" id="2.130.10.10:FF:002484">
    <property type="entry name" value="DNA damage-binding protein 1 isoform X3"/>
    <property type="match status" value="1"/>
</dbReference>
<dbReference type="Gene3D" id="1.10.150.910">
    <property type="match status" value="1"/>
</dbReference>
<dbReference type="Gene3D" id="2.130.10.10">
    <property type="entry name" value="YVTN repeat-like/Quinoprotein amine dehydrogenase"/>
    <property type="match status" value="3"/>
</dbReference>
<dbReference type="InterPro" id="IPR018846">
    <property type="entry name" value="Beta-prop_RSE1/DDB1/CPSF1_1st"/>
</dbReference>
<dbReference type="InterPro" id="IPR004871">
    <property type="entry name" value="Cleavage/polyA-sp_fac_asu_C"/>
</dbReference>
<dbReference type="InterPro" id="IPR011047">
    <property type="entry name" value="Quinoprotein_ADH-like_sf"/>
</dbReference>
<dbReference type="InterPro" id="IPR050358">
    <property type="entry name" value="RSE1/DDB1/CFT1/CPSF1"/>
</dbReference>
<dbReference type="InterPro" id="IPR015943">
    <property type="entry name" value="WD40/YVTN_repeat-like_dom_sf"/>
</dbReference>
<dbReference type="PANTHER" id="PTHR10644">
    <property type="entry name" value="DNA REPAIR/RNA PROCESSING CPSF FAMILY"/>
    <property type="match status" value="1"/>
</dbReference>
<dbReference type="Pfam" id="PF10433">
    <property type="entry name" value="Beta-prop_RSE1_1st"/>
    <property type="match status" value="1"/>
</dbReference>
<dbReference type="Pfam" id="PF23726">
    <property type="entry name" value="Beta-prop_RSE1_2nd"/>
    <property type="match status" value="1"/>
</dbReference>
<dbReference type="Pfam" id="PF03178">
    <property type="entry name" value="CPSF_A"/>
    <property type="match status" value="1"/>
</dbReference>
<dbReference type="SUPFAM" id="SSF50998">
    <property type="entry name" value="Quinoprotein alcohol dehydrogenase-like"/>
    <property type="match status" value="1"/>
</dbReference>